<gene>
    <name evidence="1" type="primary">luxS</name>
    <name type="ordered locus">NMC1956</name>
</gene>
<protein>
    <recommendedName>
        <fullName evidence="1">S-ribosylhomocysteine lyase</fullName>
        <ecNumber evidence="1">4.4.1.21</ecNumber>
    </recommendedName>
    <alternativeName>
        <fullName evidence="1">AI-2 synthesis protein</fullName>
    </alternativeName>
    <alternativeName>
        <fullName evidence="1">Autoinducer-2 production protein LuxS</fullName>
    </alternativeName>
</protein>
<keyword id="KW-0071">Autoinducer synthesis</keyword>
<keyword id="KW-0408">Iron</keyword>
<keyword id="KW-0456">Lyase</keyword>
<keyword id="KW-0479">Metal-binding</keyword>
<keyword id="KW-0673">Quorum sensing</keyword>
<evidence type="ECO:0000255" key="1">
    <source>
        <dbReference type="HAMAP-Rule" id="MF_00091"/>
    </source>
</evidence>
<reference key="1">
    <citation type="journal article" date="2007" name="PLoS Genet.">
        <title>Meningococcal genetic variation mechanisms viewed through comparative analysis of serogroup C strain FAM18.</title>
        <authorList>
            <person name="Bentley S.D."/>
            <person name="Vernikos G.S."/>
            <person name="Snyder L.A.S."/>
            <person name="Churcher C."/>
            <person name="Arrowsmith C."/>
            <person name="Chillingworth T."/>
            <person name="Cronin A."/>
            <person name="Davis P.H."/>
            <person name="Holroyd N.E."/>
            <person name="Jagels K."/>
            <person name="Maddison M."/>
            <person name="Moule S."/>
            <person name="Rabbinowitsch E."/>
            <person name="Sharp S."/>
            <person name="Unwin L."/>
            <person name="Whitehead S."/>
            <person name="Quail M.A."/>
            <person name="Achtman M."/>
            <person name="Barrell B.G."/>
            <person name="Saunders N.J."/>
            <person name="Parkhill J."/>
        </authorList>
    </citation>
    <scope>NUCLEOTIDE SEQUENCE [LARGE SCALE GENOMIC DNA]</scope>
    <source>
        <strain>ATCC 700532 / DSM 15464 / FAM18</strain>
    </source>
</reference>
<dbReference type="EC" id="4.4.1.21" evidence="1"/>
<dbReference type="EMBL" id="AM421808">
    <property type="protein sequence ID" value="CAM11116.1"/>
    <property type="molecule type" value="Genomic_DNA"/>
</dbReference>
<dbReference type="RefSeq" id="WP_002218101.1">
    <property type="nucleotide sequence ID" value="NC_008767.1"/>
</dbReference>
<dbReference type="SMR" id="A1KW60"/>
<dbReference type="KEGG" id="nmc:NMC1956"/>
<dbReference type="HOGENOM" id="CLU_107531_2_0_4"/>
<dbReference type="Proteomes" id="UP000002286">
    <property type="component" value="Chromosome"/>
</dbReference>
<dbReference type="GO" id="GO:0005506">
    <property type="term" value="F:iron ion binding"/>
    <property type="evidence" value="ECO:0007669"/>
    <property type="project" value="InterPro"/>
</dbReference>
<dbReference type="GO" id="GO:0043768">
    <property type="term" value="F:S-ribosylhomocysteine lyase activity"/>
    <property type="evidence" value="ECO:0007669"/>
    <property type="project" value="UniProtKB-UniRule"/>
</dbReference>
<dbReference type="GO" id="GO:0009372">
    <property type="term" value="P:quorum sensing"/>
    <property type="evidence" value="ECO:0007669"/>
    <property type="project" value="UniProtKB-UniRule"/>
</dbReference>
<dbReference type="FunFam" id="3.30.1360.80:FF:000001">
    <property type="entry name" value="S-ribosylhomocysteine lyase"/>
    <property type="match status" value="1"/>
</dbReference>
<dbReference type="Gene3D" id="3.30.1360.80">
    <property type="entry name" value="S-ribosylhomocysteinase (LuxS)"/>
    <property type="match status" value="1"/>
</dbReference>
<dbReference type="HAMAP" id="MF_00091">
    <property type="entry name" value="LuxS"/>
    <property type="match status" value="1"/>
</dbReference>
<dbReference type="InterPro" id="IPR037005">
    <property type="entry name" value="LuxS_sf"/>
</dbReference>
<dbReference type="InterPro" id="IPR011249">
    <property type="entry name" value="Metalloenz_LuxS/M16"/>
</dbReference>
<dbReference type="InterPro" id="IPR003815">
    <property type="entry name" value="S-ribosylhomocysteinase"/>
</dbReference>
<dbReference type="NCBIfam" id="NF002602">
    <property type="entry name" value="PRK02260.1-2"/>
    <property type="match status" value="1"/>
</dbReference>
<dbReference type="PANTHER" id="PTHR35799">
    <property type="entry name" value="S-RIBOSYLHOMOCYSTEINE LYASE"/>
    <property type="match status" value="1"/>
</dbReference>
<dbReference type="PANTHER" id="PTHR35799:SF1">
    <property type="entry name" value="S-RIBOSYLHOMOCYSTEINE LYASE"/>
    <property type="match status" value="1"/>
</dbReference>
<dbReference type="Pfam" id="PF02664">
    <property type="entry name" value="LuxS"/>
    <property type="match status" value="1"/>
</dbReference>
<dbReference type="PIRSF" id="PIRSF006160">
    <property type="entry name" value="AI2"/>
    <property type="match status" value="1"/>
</dbReference>
<dbReference type="PRINTS" id="PR01487">
    <property type="entry name" value="LUXSPROTEIN"/>
</dbReference>
<dbReference type="SUPFAM" id="SSF63411">
    <property type="entry name" value="LuxS/MPP-like metallohydrolase"/>
    <property type="match status" value="1"/>
</dbReference>
<name>LUXS_NEIMF</name>
<accession>A1KW60</accession>
<feature type="chain" id="PRO_0000298016" description="S-ribosylhomocysteine lyase">
    <location>
        <begin position="1"/>
        <end position="168"/>
    </location>
</feature>
<feature type="binding site" evidence="1">
    <location>
        <position position="54"/>
    </location>
    <ligand>
        <name>Fe cation</name>
        <dbReference type="ChEBI" id="CHEBI:24875"/>
    </ligand>
</feature>
<feature type="binding site" evidence="1">
    <location>
        <position position="58"/>
    </location>
    <ligand>
        <name>Fe cation</name>
        <dbReference type="ChEBI" id="CHEBI:24875"/>
    </ligand>
</feature>
<feature type="binding site" evidence="1">
    <location>
        <position position="128"/>
    </location>
    <ligand>
        <name>Fe cation</name>
        <dbReference type="ChEBI" id="CHEBI:24875"/>
    </ligand>
</feature>
<comment type="function">
    <text evidence="1">Involved in the synthesis of autoinducer 2 (AI-2) which is secreted by bacteria and is used to communicate both the cell density and the metabolic potential of the environment. The regulation of gene expression in response to changes in cell density is called quorum sensing. Catalyzes the transformation of S-ribosylhomocysteine (RHC) to homocysteine (HC) and 4,5-dihydroxy-2,3-pentadione (DPD).</text>
</comment>
<comment type="catalytic activity">
    <reaction evidence="1">
        <text>S-(5-deoxy-D-ribos-5-yl)-L-homocysteine = (S)-4,5-dihydroxypentane-2,3-dione + L-homocysteine</text>
        <dbReference type="Rhea" id="RHEA:17753"/>
        <dbReference type="ChEBI" id="CHEBI:29484"/>
        <dbReference type="ChEBI" id="CHEBI:58195"/>
        <dbReference type="ChEBI" id="CHEBI:58199"/>
        <dbReference type="EC" id="4.4.1.21"/>
    </reaction>
</comment>
<comment type="cofactor">
    <cofactor evidence="1">
        <name>Fe cation</name>
        <dbReference type="ChEBI" id="CHEBI:24875"/>
    </cofactor>
    <text evidence="1">Binds 1 Fe cation per subunit.</text>
</comment>
<comment type="subunit">
    <text evidence="1">Homodimer.</text>
</comment>
<comment type="similarity">
    <text evidence="1">Belongs to the LuxS family.</text>
</comment>
<sequence>MPLLDSFKVDHTRMHAPAVRVAKTMTTPKGDTITVFDLRFCIPNKEILPEKGIHTLEHLFAGFMRDHLNGNGVEIIDISPMGCRTGFYMSLIGTPSEQQVADAWLASMQDVGNVKDQSKIPELNEYQCGTYQMHSLAEAQQIAQNVLARKVAVNKNEELTLDEGLLNA</sequence>
<organism>
    <name type="scientific">Neisseria meningitidis serogroup C / serotype 2a (strain ATCC 700532 / DSM 15464 / FAM18)</name>
    <dbReference type="NCBI Taxonomy" id="272831"/>
    <lineage>
        <taxon>Bacteria</taxon>
        <taxon>Pseudomonadati</taxon>
        <taxon>Pseudomonadota</taxon>
        <taxon>Betaproteobacteria</taxon>
        <taxon>Neisseriales</taxon>
        <taxon>Neisseriaceae</taxon>
        <taxon>Neisseria</taxon>
    </lineage>
</organism>
<proteinExistence type="inferred from homology"/>